<proteinExistence type="inferred from homology"/>
<accession>O79207</accession>
<sequence length="380" mass="42622">MAPNLRKSHPLLKMINNSLIDLPTPSNISAWWNFGSLLGICLMTQILTGLLLAMHYTADTTLAFSSVAHTCRNVQYGWLIRNLHANGASFFFICIYLHIGRGFYYGSYLYKETWNTGIILLLTLMATAFVGYVLPWGQMSFWGATVITNLFSAIPYIGQTLVEWAWGGFSVDNPTLTRFFALHFLLPFAIAGLTLIHLTFLHESGSNNPLGIVSNCDKIPFHPYFTLKDILGFALMVLPLTSLALFSPNLLGDPENFTPANPLVTPPHIKPEWYFLFAYAILRSIPNKLGGVLALAASVLVLFLSPFLHKAKQRTMTFRPLSQLLFWILVTNLFILTWVGSQPVEHPFIIIGQLASITYFTILLILFPIIGTLENKMLNF</sequence>
<feature type="chain" id="PRO_0000061142" description="Cytochrome b">
    <location>
        <begin position="1"/>
        <end position="380"/>
    </location>
</feature>
<feature type="transmembrane region" description="Helical" evidence="2">
    <location>
        <begin position="34"/>
        <end position="54"/>
    </location>
</feature>
<feature type="transmembrane region" description="Helical" evidence="2">
    <location>
        <begin position="78"/>
        <end position="99"/>
    </location>
</feature>
<feature type="transmembrane region" description="Helical" evidence="2">
    <location>
        <begin position="114"/>
        <end position="134"/>
    </location>
</feature>
<feature type="transmembrane region" description="Helical" evidence="2">
    <location>
        <begin position="179"/>
        <end position="199"/>
    </location>
</feature>
<feature type="transmembrane region" description="Helical" evidence="2">
    <location>
        <begin position="227"/>
        <end position="247"/>
    </location>
</feature>
<feature type="transmembrane region" description="Helical" evidence="2">
    <location>
        <begin position="289"/>
        <end position="309"/>
    </location>
</feature>
<feature type="transmembrane region" description="Helical" evidence="2">
    <location>
        <begin position="321"/>
        <end position="341"/>
    </location>
</feature>
<feature type="transmembrane region" description="Helical" evidence="2">
    <location>
        <begin position="348"/>
        <end position="368"/>
    </location>
</feature>
<feature type="binding site" description="axial binding residue" evidence="2">
    <location>
        <position position="84"/>
    </location>
    <ligand>
        <name>heme b</name>
        <dbReference type="ChEBI" id="CHEBI:60344"/>
        <label>b562</label>
    </ligand>
    <ligandPart>
        <name>Fe</name>
        <dbReference type="ChEBI" id="CHEBI:18248"/>
    </ligandPart>
</feature>
<feature type="binding site" description="axial binding residue" evidence="2">
    <location>
        <position position="98"/>
    </location>
    <ligand>
        <name>heme b</name>
        <dbReference type="ChEBI" id="CHEBI:60344"/>
        <label>b566</label>
    </ligand>
    <ligandPart>
        <name>Fe</name>
        <dbReference type="ChEBI" id="CHEBI:18248"/>
    </ligandPart>
</feature>
<feature type="binding site" description="axial binding residue" evidence="2">
    <location>
        <position position="183"/>
    </location>
    <ligand>
        <name>heme b</name>
        <dbReference type="ChEBI" id="CHEBI:60344"/>
        <label>b562</label>
    </ligand>
    <ligandPart>
        <name>Fe</name>
        <dbReference type="ChEBI" id="CHEBI:18248"/>
    </ligandPart>
</feature>
<feature type="binding site" description="axial binding residue" evidence="2">
    <location>
        <position position="197"/>
    </location>
    <ligand>
        <name>heme b</name>
        <dbReference type="ChEBI" id="CHEBI:60344"/>
        <label>b566</label>
    </ligand>
    <ligandPart>
        <name>Fe</name>
        <dbReference type="ChEBI" id="CHEBI:18248"/>
    </ligandPart>
</feature>
<feature type="binding site" evidence="2">
    <location>
        <position position="202"/>
    </location>
    <ligand>
        <name>a ubiquinone</name>
        <dbReference type="ChEBI" id="CHEBI:16389"/>
    </ligand>
</feature>
<dbReference type="EMBL" id="AF076060">
    <property type="protein sequence ID" value="AAC68617.1"/>
    <property type="molecule type" value="Genomic_DNA"/>
</dbReference>
<dbReference type="SMR" id="O79207"/>
<dbReference type="GO" id="GO:0005743">
    <property type="term" value="C:mitochondrial inner membrane"/>
    <property type="evidence" value="ECO:0007669"/>
    <property type="project" value="UniProtKB-SubCell"/>
</dbReference>
<dbReference type="GO" id="GO:0045275">
    <property type="term" value="C:respiratory chain complex III"/>
    <property type="evidence" value="ECO:0007669"/>
    <property type="project" value="InterPro"/>
</dbReference>
<dbReference type="GO" id="GO:0046872">
    <property type="term" value="F:metal ion binding"/>
    <property type="evidence" value="ECO:0007669"/>
    <property type="project" value="UniProtKB-KW"/>
</dbReference>
<dbReference type="GO" id="GO:0008121">
    <property type="term" value="F:ubiquinol-cytochrome-c reductase activity"/>
    <property type="evidence" value="ECO:0007669"/>
    <property type="project" value="InterPro"/>
</dbReference>
<dbReference type="GO" id="GO:0006122">
    <property type="term" value="P:mitochondrial electron transport, ubiquinol to cytochrome c"/>
    <property type="evidence" value="ECO:0007669"/>
    <property type="project" value="TreeGrafter"/>
</dbReference>
<dbReference type="CDD" id="cd00290">
    <property type="entry name" value="cytochrome_b_C"/>
    <property type="match status" value="1"/>
</dbReference>
<dbReference type="CDD" id="cd00284">
    <property type="entry name" value="Cytochrome_b_N"/>
    <property type="match status" value="1"/>
</dbReference>
<dbReference type="FunFam" id="1.20.810.10:FF:000002">
    <property type="entry name" value="Cytochrome b"/>
    <property type="match status" value="1"/>
</dbReference>
<dbReference type="Gene3D" id="1.20.810.10">
    <property type="entry name" value="Cytochrome Bc1 Complex, Chain C"/>
    <property type="match status" value="1"/>
</dbReference>
<dbReference type="InterPro" id="IPR005798">
    <property type="entry name" value="Cyt_b/b6_C"/>
</dbReference>
<dbReference type="InterPro" id="IPR036150">
    <property type="entry name" value="Cyt_b/b6_C_sf"/>
</dbReference>
<dbReference type="InterPro" id="IPR005797">
    <property type="entry name" value="Cyt_b/b6_N"/>
</dbReference>
<dbReference type="InterPro" id="IPR027387">
    <property type="entry name" value="Cytb/b6-like_sf"/>
</dbReference>
<dbReference type="InterPro" id="IPR030689">
    <property type="entry name" value="Cytochrome_b"/>
</dbReference>
<dbReference type="InterPro" id="IPR048260">
    <property type="entry name" value="Cytochrome_b_C_euk/bac"/>
</dbReference>
<dbReference type="InterPro" id="IPR048259">
    <property type="entry name" value="Cytochrome_b_N_euk/bac"/>
</dbReference>
<dbReference type="InterPro" id="IPR016174">
    <property type="entry name" value="Di-haem_cyt_TM"/>
</dbReference>
<dbReference type="PANTHER" id="PTHR19271">
    <property type="entry name" value="CYTOCHROME B"/>
    <property type="match status" value="1"/>
</dbReference>
<dbReference type="PANTHER" id="PTHR19271:SF16">
    <property type="entry name" value="CYTOCHROME B"/>
    <property type="match status" value="1"/>
</dbReference>
<dbReference type="Pfam" id="PF00032">
    <property type="entry name" value="Cytochrom_B_C"/>
    <property type="match status" value="1"/>
</dbReference>
<dbReference type="Pfam" id="PF00033">
    <property type="entry name" value="Cytochrome_B"/>
    <property type="match status" value="1"/>
</dbReference>
<dbReference type="PIRSF" id="PIRSF038885">
    <property type="entry name" value="COB"/>
    <property type="match status" value="1"/>
</dbReference>
<dbReference type="SUPFAM" id="SSF81648">
    <property type="entry name" value="a domain/subunit of cytochrome bc1 complex (Ubiquinol-cytochrome c reductase)"/>
    <property type="match status" value="1"/>
</dbReference>
<dbReference type="SUPFAM" id="SSF81342">
    <property type="entry name" value="Transmembrane di-heme cytochromes"/>
    <property type="match status" value="1"/>
</dbReference>
<dbReference type="PROSITE" id="PS51003">
    <property type="entry name" value="CYTB_CTER"/>
    <property type="match status" value="1"/>
</dbReference>
<dbReference type="PROSITE" id="PS51002">
    <property type="entry name" value="CYTB_NTER"/>
    <property type="match status" value="1"/>
</dbReference>
<gene>
    <name type="primary">MT-CYB</name>
    <name type="synonym">COB</name>
    <name type="synonym">CYTB</name>
    <name type="synonym">MTCYB</name>
</gene>
<name>CYB_MACGA</name>
<keyword id="KW-0249">Electron transport</keyword>
<keyword id="KW-0349">Heme</keyword>
<keyword id="KW-0408">Iron</keyword>
<keyword id="KW-0472">Membrane</keyword>
<keyword id="KW-0479">Metal-binding</keyword>
<keyword id="KW-0496">Mitochondrion</keyword>
<keyword id="KW-0999">Mitochondrion inner membrane</keyword>
<keyword id="KW-0679">Respiratory chain</keyword>
<keyword id="KW-0812">Transmembrane</keyword>
<keyword id="KW-1133">Transmembrane helix</keyword>
<keyword id="KW-0813">Transport</keyword>
<keyword id="KW-0830">Ubiquinone</keyword>
<comment type="function">
    <text evidence="2">Component of the ubiquinol-cytochrome c reductase complex (complex III or cytochrome b-c1 complex) that is part of the mitochondrial respiratory chain. The b-c1 complex mediates electron transfer from ubiquinol to cytochrome c. Contributes to the generation of a proton gradient across the mitochondrial membrane that is then used for ATP synthesis.</text>
</comment>
<comment type="cofactor">
    <cofactor evidence="2">
        <name>heme b</name>
        <dbReference type="ChEBI" id="CHEBI:60344"/>
    </cofactor>
    <text evidence="2">Binds 2 heme b groups non-covalently.</text>
</comment>
<comment type="subunit">
    <text evidence="2">The cytochrome bc1 complex contains 11 subunits: 3 respiratory subunits (MT-CYB, CYC1 and UQCRFS1), 2 core proteins (UQCRC1 and UQCRC2) and 6 low-molecular weight proteins (UQCRH/QCR6, UQCRB/QCR7, UQCRQ/QCR8, UQCR10/QCR9, UQCR11/QCR10 and a cleavage product of UQCRFS1). This cytochrome bc1 complex then forms a dimer.</text>
</comment>
<comment type="subcellular location">
    <subcellularLocation>
        <location evidence="2">Mitochondrion inner membrane</location>
        <topology evidence="2">Multi-pass membrane protein</topology>
    </subcellularLocation>
</comment>
<comment type="miscellaneous">
    <text evidence="1">Heme 1 (or BL or b562) is low-potential and absorbs at about 562 nm, and heme 2 (or BH or b566) is high-potential and absorbs at about 566 nm.</text>
</comment>
<comment type="similarity">
    <text evidence="3 4">Belongs to the cytochrome b family.</text>
</comment>
<comment type="caution">
    <text evidence="2">The full-length protein contains only eight transmembrane helices, not nine as predicted by bioinformatics tools.</text>
</comment>
<reference key="1">
    <citation type="journal article" date="1998" name="Mol. Biol. Evol.">
        <title>Body size effects and rates of cytochrome-b evolution in tube-nosed seabirds.</title>
        <authorList>
            <person name="Nunn G.B."/>
            <person name="Stanley S.E."/>
        </authorList>
    </citation>
    <scope>NUCLEOTIDE SEQUENCE [GENOMIC DNA]</scope>
    <source>
        <strain>Isolate SGP-MI-2</strain>
    </source>
</reference>
<protein>
    <recommendedName>
        <fullName>Cytochrome b</fullName>
    </recommendedName>
    <alternativeName>
        <fullName>Complex III subunit 3</fullName>
    </alternativeName>
    <alternativeName>
        <fullName>Complex III subunit III</fullName>
    </alternativeName>
    <alternativeName>
        <fullName>Cytochrome b-c1 complex subunit 3</fullName>
    </alternativeName>
    <alternativeName>
        <fullName>Ubiquinol-cytochrome-c reductase complex cytochrome b subunit</fullName>
    </alternativeName>
</protein>
<geneLocation type="mitochondrion"/>
<evidence type="ECO:0000250" key="1"/>
<evidence type="ECO:0000250" key="2">
    <source>
        <dbReference type="UniProtKB" id="P00157"/>
    </source>
</evidence>
<evidence type="ECO:0000255" key="3">
    <source>
        <dbReference type="PROSITE-ProRule" id="PRU00967"/>
    </source>
</evidence>
<evidence type="ECO:0000255" key="4">
    <source>
        <dbReference type="PROSITE-ProRule" id="PRU00968"/>
    </source>
</evidence>
<organism>
    <name type="scientific">Macronectes giganteus</name>
    <name type="common">Southern giant petrel</name>
    <name type="synonym">Procellaria gigantea</name>
    <dbReference type="NCBI Taxonomy" id="37057"/>
    <lineage>
        <taxon>Eukaryota</taxon>
        <taxon>Metazoa</taxon>
        <taxon>Chordata</taxon>
        <taxon>Craniata</taxon>
        <taxon>Vertebrata</taxon>
        <taxon>Euteleostomi</taxon>
        <taxon>Archelosauria</taxon>
        <taxon>Archosauria</taxon>
        <taxon>Dinosauria</taxon>
        <taxon>Saurischia</taxon>
        <taxon>Theropoda</taxon>
        <taxon>Coelurosauria</taxon>
        <taxon>Aves</taxon>
        <taxon>Neognathae</taxon>
        <taxon>Neoaves</taxon>
        <taxon>Aequornithes</taxon>
        <taxon>Procellariiformes</taxon>
        <taxon>Procellariidae</taxon>
        <taxon>Macronectes</taxon>
    </lineage>
</organism>